<reference key="1">
    <citation type="journal article" date="2008" name="J. Bacteriol.">
        <title>The pangenome structure of Escherichia coli: comparative genomic analysis of E. coli commensal and pathogenic isolates.</title>
        <authorList>
            <person name="Rasko D.A."/>
            <person name="Rosovitz M.J."/>
            <person name="Myers G.S.A."/>
            <person name="Mongodin E.F."/>
            <person name="Fricke W.F."/>
            <person name="Gajer P."/>
            <person name="Crabtree J."/>
            <person name="Sebaihia M."/>
            <person name="Thomson N.R."/>
            <person name="Chaudhuri R."/>
            <person name="Henderson I.R."/>
            <person name="Sperandio V."/>
            <person name="Ravel J."/>
        </authorList>
    </citation>
    <scope>NUCLEOTIDE SEQUENCE [LARGE SCALE GENOMIC DNA]</scope>
    <source>
        <strain>HS</strain>
    </source>
</reference>
<name>MDTD_ECOHS</name>
<proteinExistence type="inferred from homology"/>
<organism>
    <name type="scientific">Escherichia coli O9:H4 (strain HS)</name>
    <dbReference type="NCBI Taxonomy" id="331112"/>
    <lineage>
        <taxon>Bacteria</taxon>
        <taxon>Pseudomonadati</taxon>
        <taxon>Pseudomonadota</taxon>
        <taxon>Gammaproteobacteria</taxon>
        <taxon>Enterobacterales</taxon>
        <taxon>Enterobacteriaceae</taxon>
        <taxon>Escherichia</taxon>
    </lineage>
</organism>
<protein>
    <recommendedName>
        <fullName evidence="1">Putative multidrug resistance protein MdtD</fullName>
    </recommendedName>
</protein>
<comment type="subcellular location">
    <subcellularLocation>
        <location evidence="1">Cell inner membrane</location>
        <topology evidence="1">Multi-pass membrane protein</topology>
    </subcellularLocation>
</comment>
<comment type="similarity">
    <text evidence="1">Belongs to the major facilitator superfamily. TCR/Tet family.</text>
</comment>
<evidence type="ECO:0000255" key="1">
    <source>
        <dbReference type="HAMAP-Rule" id="MF_01577"/>
    </source>
</evidence>
<sequence>MTDLPDSTRWQLWIVAFGFFMQSLDTTIVNTALPSMAQSLGESPLHMHMVIVSYVLTVAVMLPASGWLADKVGVRNIFFTAIVLFTLGSLFCALSGTLNELLLARALQGVGGAMMVPVGRLTVMKIVPREQYMAAMTFVTLPGQVGPLLGPALGGLLVEYASWHWIFLINIPVGIIGAIATLLLMPNYTMQTRRFDLSGFLLLAVGMAVLTLALDGSKGTGLSPLTIAGLVAVGVVALVLYLLHARNNNRALFSLKLFRTRTFSLGLAGSFAGRIGSGMLPFMTPVFLQIGLGFSPFHAGLMMIPMVLGSMGMKRIVVQVVNRFGYRRVLVATTLGLSLVTLLFMTTALLGWYYVLPFVLFLQGMVNSTRFSSMNTLTLKDLPDNLASSGNSLLSMIMQLSMSIGVTIAGLLLGLFGSQHVSVDSGTTQTVFMYTWLSMALIIALPAFIFARVPNDTHQNVAISRRKRSAQ</sequence>
<gene>
    <name evidence="1" type="primary">mdtD</name>
    <name type="ordered locus">EcHS_A2219</name>
</gene>
<keyword id="KW-0997">Cell inner membrane</keyword>
<keyword id="KW-1003">Cell membrane</keyword>
<keyword id="KW-0472">Membrane</keyword>
<keyword id="KW-0812">Transmembrane</keyword>
<keyword id="KW-1133">Transmembrane helix</keyword>
<keyword id="KW-0813">Transport</keyword>
<accession>A8A1U9</accession>
<feature type="chain" id="PRO_1000069263" description="Putative multidrug resistance protein MdtD">
    <location>
        <begin position="1"/>
        <end position="471"/>
    </location>
</feature>
<feature type="topological domain" description="Periplasmic" evidence="1">
    <location>
        <begin position="1"/>
        <end position="11"/>
    </location>
</feature>
<feature type="transmembrane region" description="Helical" evidence="1">
    <location>
        <begin position="12"/>
        <end position="32"/>
    </location>
</feature>
<feature type="topological domain" description="Cytoplasmic" evidence="1">
    <location>
        <begin position="33"/>
        <end position="48"/>
    </location>
</feature>
<feature type="transmembrane region" description="Helical" evidence="1">
    <location>
        <begin position="49"/>
        <end position="69"/>
    </location>
</feature>
<feature type="topological domain" description="Periplasmic" evidence="1">
    <location>
        <begin position="70"/>
        <end position="76"/>
    </location>
</feature>
<feature type="transmembrane region" description="Helical" evidence="1">
    <location>
        <begin position="77"/>
        <end position="97"/>
    </location>
</feature>
<feature type="topological domain" description="Cytoplasmic" evidence="1">
    <location>
        <begin position="98"/>
        <end position="101"/>
    </location>
</feature>
<feature type="transmembrane region" description="Helical" evidence="1">
    <location>
        <begin position="102"/>
        <end position="124"/>
    </location>
</feature>
<feature type="topological domain" description="Periplasmic" evidence="1">
    <location>
        <begin position="125"/>
        <end position="137"/>
    </location>
</feature>
<feature type="transmembrane region" description="Helical" evidence="1">
    <location>
        <begin position="138"/>
        <end position="158"/>
    </location>
</feature>
<feature type="topological domain" description="Cytoplasmic" evidence="1">
    <location>
        <begin position="159"/>
        <end position="164"/>
    </location>
</feature>
<feature type="transmembrane region" description="Helical" evidence="1">
    <location>
        <begin position="165"/>
        <end position="185"/>
    </location>
</feature>
<feature type="topological domain" description="Periplasmic" evidence="1">
    <location>
        <begin position="186"/>
        <end position="196"/>
    </location>
</feature>
<feature type="transmembrane region" description="Helical" evidence="1">
    <location>
        <begin position="197"/>
        <end position="217"/>
    </location>
</feature>
<feature type="topological domain" description="Cytoplasmic" evidence="1">
    <location>
        <begin position="218"/>
        <end position="224"/>
    </location>
</feature>
<feature type="transmembrane region" description="Helical" evidence="1">
    <location>
        <begin position="225"/>
        <end position="245"/>
    </location>
</feature>
<feature type="topological domain" description="Periplasmic" evidence="1">
    <location>
        <begin position="246"/>
        <end position="262"/>
    </location>
</feature>
<feature type="transmembrane region" description="Helical" evidence="1">
    <location>
        <begin position="263"/>
        <end position="283"/>
    </location>
</feature>
<feature type="topological domain" description="Cytoplasmic" evidence="1">
    <location>
        <begin position="284"/>
        <end position="285"/>
    </location>
</feature>
<feature type="transmembrane region" description="Helical" evidence="1">
    <location>
        <begin position="286"/>
        <end position="306"/>
    </location>
</feature>
<feature type="topological domain" description="Periplasmic" evidence="1">
    <location>
        <begin position="307"/>
        <end position="341"/>
    </location>
</feature>
<feature type="transmembrane region" description="Helical" evidence="1">
    <location>
        <begin position="342"/>
        <end position="362"/>
    </location>
</feature>
<feature type="topological domain" description="Cytoplasmic" evidence="1">
    <location>
        <begin position="363"/>
        <end position="395"/>
    </location>
</feature>
<feature type="transmembrane region" description="Helical" evidence="1">
    <location>
        <begin position="396"/>
        <end position="416"/>
    </location>
</feature>
<feature type="topological domain" description="Periplasmic" evidence="1">
    <location>
        <begin position="417"/>
        <end position="430"/>
    </location>
</feature>
<feature type="transmembrane region" description="Helical" evidence="1">
    <location>
        <begin position="431"/>
        <end position="451"/>
    </location>
</feature>
<feature type="topological domain" description="Cytoplasmic" evidence="1">
    <location>
        <begin position="452"/>
        <end position="471"/>
    </location>
</feature>
<dbReference type="EMBL" id="CP000802">
    <property type="protein sequence ID" value="ABV06503.1"/>
    <property type="molecule type" value="Genomic_DNA"/>
</dbReference>
<dbReference type="RefSeq" id="WP_000130850.1">
    <property type="nucleotide sequence ID" value="NC_009800.1"/>
</dbReference>
<dbReference type="SMR" id="A8A1U9"/>
<dbReference type="KEGG" id="ecx:EcHS_A2219"/>
<dbReference type="HOGENOM" id="CLU_000960_28_0_6"/>
<dbReference type="GO" id="GO:0005886">
    <property type="term" value="C:plasma membrane"/>
    <property type="evidence" value="ECO:0007669"/>
    <property type="project" value="UniProtKB-SubCell"/>
</dbReference>
<dbReference type="GO" id="GO:0022857">
    <property type="term" value="F:transmembrane transporter activity"/>
    <property type="evidence" value="ECO:0007669"/>
    <property type="project" value="UniProtKB-UniRule"/>
</dbReference>
<dbReference type="CDD" id="cd17503">
    <property type="entry name" value="MFS_LmrB_MDR_like"/>
    <property type="match status" value="1"/>
</dbReference>
<dbReference type="FunFam" id="1.20.1250.20:FF:000021">
    <property type="entry name" value="Putative multidrug resistance protein MdtD"/>
    <property type="match status" value="1"/>
</dbReference>
<dbReference type="FunFam" id="1.20.1720.10:FF:000001">
    <property type="entry name" value="Putative multidrug resistance protein MdtD"/>
    <property type="match status" value="1"/>
</dbReference>
<dbReference type="Gene3D" id="1.20.1250.20">
    <property type="entry name" value="MFS general substrate transporter like domains"/>
    <property type="match status" value="1"/>
</dbReference>
<dbReference type="Gene3D" id="1.20.1720.10">
    <property type="entry name" value="Multidrug resistance protein D"/>
    <property type="match status" value="1"/>
</dbReference>
<dbReference type="HAMAP" id="MF_01577">
    <property type="entry name" value="MFS_MdtD"/>
    <property type="match status" value="1"/>
</dbReference>
<dbReference type="InterPro" id="IPR004638">
    <property type="entry name" value="EmrB-like"/>
</dbReference>
<dbReference type="InterPro" id="IPR011701">
    <property type="entry name" value="MFS"/>
</dbReference>
<dbReference type="InterPro" id="IPR020846">
    <property type="entry name" value="MFS_dom"/>
</dbReference>
<dbReference type="InterPro" id="IPR036259">
    <property type="entry name" value="MFS_trans_sf"/>
</dbReference>
<dbReference type="InterPro" id="IPR023721">
    <property type="entry name" value="Multi-R_MdtD"/>
</dbReference>
<dbReference type="NCBIfam" id="TIGR00711">
    <property type="entry name" value="efflux_EmrB"/>
    <property type="match status" value="1"/>
</dbReference>
<dbReference type="NCBIfam" id="NF007799">
    <property type="entry name" value="PRK10504.1"/>
    <property type="match status" value="1"/>
</dbReference>
<dbReference type="PANTHER" id="PTHR42718:SF46">
    <property type="entry name" value="BLR6921 PROTEIN"/>
    <property type="match status" value="1"/>
</dbReference>
<dbReference type="PANTHER" id="PTHR42718">
    <property type="entry name" value="MAJOR FACILITATOR SUPERFAMILY MULTIDRUG TRANSPORTER MFSC"/>
    <property type="match status" value="1"/>
</dbReference>
<dbReference type="Pfam" id="PF07690">
    <property type="entry name" value="MFS_1"/>
    <property type="match status" value="1"/>
</dbReference>
<dbReference type="PRINTS" id="PR01036">
    <property type="entry name" value="TCRTETB"/>
</dbReference>
<dbReference type="SUPFAM" id="SSF103473">
    <property type="entry name" value="MFS general substrate transporter"/>
    <property type="match status" value="1"/>
</dbReference>
<dbReference type="PROSITE" id="PS50850">
    <property type="entry name" value="MFS"/>
    <property type="match status" value="1"/>
</dbReference>